<feature type="chain" id="PRO_0000354655" description="Large ribosomal subunit protein uL16c">
    <location>
        <begin position="1"/>
        <end position="135"/>
    </location>
</feature>
<geneLocation type="chloroplast"/>
<sequence>MLSPQRTRFRKQHRGRMKGISSRGNRICFGRYALQALEPAWITSRQIEAGRRAMSRNVRRGGQIWVRIFPDKPVTVRPTETRMGSGKGFPEYWVAVVKPGKILYEMGGVPENIARKAISIASSKMPIRTQFIISG</sequence>
<reference key="1">
    <citation type="journal article" date="2007" name="BMC Genomics">
        <title>Rapid evolutionary change of common bean (Phaseolus vulgaris L) plastome, and the genomic diversification of legume chloroplasts.</title>
        <authorList>
            <person name="Guo X."/>
            <person name="Castillo-Ramirez S."/>
            <person name="Gonzalez V."/>
            <person name="Bustos P."/>
            <person name="Fernandez-Vazquez J.L."/>
            <person name="Santamaria R.I."/>
            <person name="Arellano J."/>
            <person name="Cevallos M.A."/>
            <person name="Davila G."/>
        </authorList>
    </citation>
    <scope>NUCLEOTIDE SEQUENCE [LARGE SCALE GENOMIC DNA]</scope>
    <source>
        <strain>cv. Negro Jamapa</strain>
    </source>
</reference>
<reference key="2">
    <citation type="submission" date="2007-10" db="EMBL/GenBank/DDBJ databases">
        <title>Complete nucleotide sequence of the plastid genome of the common bean, Phaseolus vulgaris.</title>
        <authorList>
            <person name="Moore M.J."/>
            <person name="Triplett E.W."/>
            <person name="Broughton W.J."/>
            <person name="Soltis P.S."/>
            <person name="Soltis D.E."/>
        </authorList>
    </citation>
    <scope>NUCLEOTIDE SEQUENCE [LARGE SCALE GENOMIC DNA]</scope>
</reference>
<accession>A4GG85</accession>
<protein>
    <recommendedName>
        <fullName evidence="1">Large ribosomal subunit protein uL16c</fullName>
    </recommendedName>
    <alternativeName>
        <fullName evidence="2">50S ribosomal protein L16, chloroplastic</fullName>
    </alternativeName>
</protein>
<keyword id="KW-0150">Chloroplast</keyword>
<keyword id="KW-0934">Plastid</keyword>
<keyword id="KW-0687">Ribonucleoprotein</keyword>
<keyword id="KW-0689">Ribosomal protein</keyword>
<comment type="subunit">
    <text evidence="1">Part of the 50S ribosomal subunit.</text>
</comment>
<comment type="subcellular location">
    <subcellularLocation>
        <location>Plastid</location>
        <location>Chloroplast</location>
    </subcellularLocation>
</comment>
<comment type="similarity">
    <text evidence="1">Belongs to the universal ribosomal protein uL16 family.</text>
</comment>
<dbReference type="EMBL" id="DQ886273">
    <property type="protein sequence ID" value="ABH88066.2"/>
    <property type="molecule type" value="Genomic_DNA"/>
</dbReference>
<dbReference type="EMBL" id="EU196765">
    <property type="protein sequence ID" value="ABW22802.1"/>
    <property type="molecule type" value="Genomic_DNA"/>
</dbReference>
<dbReference type="RefSeq" id="YP_001122786.2">
    <property type="nucleotide sequence ID" value="NC_009259.1"/>
</dbReference>
<dbReference type="SMR" id="A4GG85"/>
<dbReference type="GeneID" id="4961756"/>
<dbReference type="KEGG" id="pvu:4961756"/>
<dbReference type="eggNOG" id="KOG3422">
    <property type="taxonomic scope" value="Eukaryota"/>
</dbReference>
<dbReference type="GO" id="GO:0009507">
    <property type="term" value="C:chloroplast"/>
    <property type="evidence" value="ECO:0007669"/>
    <property type="project" value="UniProtKB-SubCell"/>
</dbReference>
<dbReference type="GO" id="GO:0005762">
    <property type="term" value="C:mitochondrial large ribosomal subunit"/>
    <property type="evidence" value="ECO:0007669"/>
    <property type="project" value="TreeGrafter"/>
</dbReference>
<dbReference type="GO" id="GO:0019843">
    <property type="term" value="F:rRNA binding"/>
    <property type="evidence" value="ECO:0007669"/>
    <property type="project" value="InterPro"/>
</dbReference>
<dbReference type="GO" id="GO:0003735">
    <property type="term" value="F:structural constituent of ribosome"/>
    <property type="evidence" value="ECO:0007669"/>
    <property type="project" value="InterPro"/>
</dbReference>
<dbReference type="GO" id="GO:0032543">
    <property type="term" value="P:mitochondrial translation"/>
    <property type="evidence" value="ECO:0007669"/>
    <property type="project" value="TreeGrafter"/>
</dbReference>
<dbReference type="CDD" id="cd01433">
    <property type="entry name" value="Ribosomal_L16_L10e"/>
    <property type="match status" value="1"/>
</dbReference>
<dbReference type="FunFam" id="3.90.1170.10:FF:000001">
    <property type="entry name" value="50S ribosomal protein L16"/>
    <property type="match status" value="1"/>
</dbReference>
<dbReference type="Gene3D" id="3.90.1170.10">
    <property type="entry name" value="Ribosomal protein L10e/L16"/>
    <property type="match status" value="1"/>
</dbReference>
<dbReference type="HAMAP" id="MF_01342">
    <property type="entry name" value="Ribosomal_uL16"/>
    <property type="match status" value="1"/>
</dbReference>
<dbReference type="InterPro" id="IPR047873">
    <property type="entry name" value="Ribosomal_uL16"/>
</dbReference>
<dbReference type="InterPro" id="IPR000114">
    <property type="entry name" value="Ribosomal_uL16_bact-type"/>
</dbReference>
<dbReference type="InterPro" id="IPR020798">
    <property type="entry name" value="Ribosomal_uL16_CS"/>
</dbReference>
<dbReference type="InterPro" id="IPR016180">
    <property type="entry name" value="Ribosomal_uL16_dom"/>
</dbReference>
<dbReference type="InterPro" id="IPR036920">
    <property type="entry name" value="Ribosomal_uL16_sf"/>
</dbReference>
<dbReference type="NCBIfam" id="TIGR01164">
    <property type="entry name" value="rplP_bact"/>
    <property type="match status" value="1"/>
</dbReference>
<dbReference type="PANTHER" id="PTHR12220">
    <property type="entry name" value="50S/60S RIBOSOMAL PROTEIN L16"/>
    <property type="match status" value="1"/>
</dbReference>
<dbReference type="PANTHER" id="PTHR12220:SF13">
    <property type="entry name" value="LARGE RIBOSOMAL SUBUNIT PROTEIN UL16M"/>
    <property type="match status" value="1"/>
</dbReference>
<dbReference type="Pfam" id="PF00252">
    <property type="entry name" value="Ribosomal_L16"/>
    <property type="match status" value="1"/>
</dbReference>
<dbReference type="PRINTS" id="PR00060">
    <property type="entry name" value="RIBOSOMALL16"/>
</dbReference>
<dbReference type="SUPFAM" id="SSF54686">
    <property type="entry name" value="Ribosomal protein L16p/L10e"/>
    <property type="match status" value="1"/>
</dbReference>
<dbReference type="PROSITE" id="PS00586">
    <property type="entry name" value="RIBOSOMAL_L16_1"/>
    <property type="match status" value="1"/>
</dbReference>
<dbReference type="PROSITE" id="PS00701">
    <property type="entry name" value="RIBOSOMAL_L16_2"/>
    <property type="match status" value="1"/>
</dbReference>
<gene>
    <name evidence="1" type="primary">rpl16</name>
</gene>
<organism>
    <name type="scientific">Phaseolus vulgaris</name>
    <name type="common">Kidney bean</name>
    <name type="synonym">French bean</name>
    <dbReference type="NCBI Taxonomy" id="3885"/>
    <lineage>
        <taxon>Eukaryota</taxon>
        <taxon>Viridiplantae</taxon>
        <taxon>Streptophyta</taxon>
        <taxon>Embryophyta</taxon>
        <taxon>Tracheophyta</taxon>
        <taxon>Spermatophyta</taxon>
        <taxon>Magnoliopsida</taxon>
        <taxon>eudicotyledons</taxon>
        <taxon>Gunneridae</taxon>
        <taxon>Pentapetalae</taxon>
        <taxon>rosids</taxon>
        <taxon>fabids</taxon>
        <taxon>Fabales</taxon>
        <taxon>Fabaceae</taxon>
        <taxon>Papilionoideae</taxon>
        <taxon>50 kb inversion clade</taxon>
        <taxon>NPAAA clade</taxon>
        <taxon>indigoferoid/millettioid clade</taxon>
        <taxon>Phaseoleae</taxon>
        <taxon>Phaseolus</taxon>
    </lineage>
</organism>
<proteinExistence type="inferred from homology"/>
<name>RK16_PHAVU</name>
<evidence type="ECO:0000255" key="1">
    <source>
        <dbReference type="HAMAP-Rule" id="MF_01342"/>
    </source>
</evidence>
<evidence type="ECO:0000305" key="2"/>